<organism>
    <name type="scientific">Cupriavidus metallidurans (strain ATCC 43123 / DSM 2839 / NBRC 102507 / CH34)</name>
    <name type="common">Ralstonia metallidurans</name>
    <dbReference type="NCBI Taxonomy" id="266264"/>
    <lineage>
        <taxon>Bacteria</taxon>
        <taxon>Pseudomonadati</taxon>
        <taxon>Pseudomonadota</taxon>
        <taxon>Betaproteobacteria</taxon>
        <taxon>Burkholderiales</taxon>
        <taxon>Burkholderiaceae</taxon>
        <taxon>Cupriavidus</taxon>
    </lineage>
</organism>
<gene>
    <name evidence="1" type="primary">lexA</name>
    <name type="ordered locus">Rmet_1981</name>
</gene>
<reference key="1">
    <citation type="journal article" date="2010" name="PLoS ONE">
        <title>The complete genome sequence of Cupriavidus metallidurans strain CH34, a master survivalist in harsh and anthropogenic environments.</title>
        <authorList>
            <person name="Janssen P.J."/>
            <person name="Van Houdt R."/>
            <person name="Moors H."/>
            <person name="Monsieurs P."/>
            <person name="Morin N."/>
            <person name="Michaux A."/>
            <person name="Benotmane M.A."/>
            <person name="Leys N."/>
            <person name="Vallaeys T."/>
            <person name="Lapidus A."/>
            <person name="Monchy S."/>
            <person name="Medigue C."/>
            <person name="Taghavi S."/>
            <person name="McCorkle S."/>
            <person name="Dunn J."/>
            <person name="van der Lelie D."/>
            <person name="Mergeay M."/>
        </authorList>
    </citation>
    <scope>NUCLEOTIDE SEQUENCE [LARGE SCALE GENOMIC DNA]</scope>
    <source>
        <strain>ATCC 43123 / DSM 2839 / NBRC 102507 / CH34</strain>
    </source>
</reference>
<protein>
    <recommendedName>
        <fullName evidence="1">LexA repressor</fullName>
        <ecNumber evidence="1">3.4.21.88</ecNumber>
    </recommendedName>
</protein>
<proteinExistence type="inferred from homology"/>
<accession>Q1LLW6</accession>
<sequence length="218" mass="23767">MATLTPRQQQIFDLIRDTIRNTGFPPTRAEIAAEFGFSSPNSAEEHLRALARKGVIELTPGASRGIRLKVTRSDSERPDQFSLPMPGVLQLTLPLVGRVAAGSPILAAEHIDRQYQVDASVFDERPDYLLRVRGLSMRDAGILDGDLLAVKKASEAANGKVVVARLGDDVTVKRLKKRGDTIELIAENPDFQNIVLHAGRDEFSLEGIAVGLIRSSGF</sequence>
<comment type="function">
    <text evidence="1">Represses a number of genes involved in the response to DNA damage (SOS response), including recA and lexA. In the presence of single-stranded DNA, RecA interacts with LexA causing an autocatalytic cleavage which disrupts the DNA-binding part of LexA, leading to derepression of the SOS regulon and eventually DNA repair.</text>
</comment>
<comment type="catalytic activity">
    <reaction evidence="1">
        <text>Hydrolysis of Ala-|-Gly bond in repressor LexA.</text>
        <dbReference type="EC" id="3.4.21.88"/>
    </reaction>
</comment>
<comment type="subunit">
    <text evidence="1">Homodimer.</text>
</comment>
<comment type="similarity">
    <text evidence="1">Belongs to the peptidase S24 family.</text>
</comment>
<dbReference type="EC" id="3.4.21.88" evidence="1"/>
<dbReference type="EMBL" id="CP000352">
    <property type="protein sequence ID" value="ABF08860.1"/>
    <property type="molecule type" value="Genomic_DNA"/>
</dbReference>
<dbReference type="RefSeq" id="WP_011516701.1">
    <property type="nucleotide sequence ID" value="NC_007973.1"/>
</dbReference>
<dbReference type="SMR" id="Q1LLW6"/>
<dbReference type="STRING" id="266264.Rmet_1981"/>
<dbReference type="MEROPS" id="S24.001"/>
<dbReference type="KEGG" id="rme:Rmet_1981"/>
<dbReference type="eggNOG" id="COG1974">
    <property type="taxonomic scope" value="Bacteria"/>
</dbReference>
<dbReference type="HOGENOM" id="CLU_066192_45_3_4"/>
<dbReference type="Proteomes" id="UP000002429">
    <property type="component" value="Chromosome"/>
</dbReference>
<dbReference type="GO" id="GO:0003677">
    <property type="term" value="F:DNA binding"/>
    <property type="evidence" value="ECO:0007669"/>
    <property type="project" value="UniProtKB-UniRule"/>
</dbReference>
<dbReference type="GO" id="GO:0004252">
    <property type="term" value="F:serine-type endopeptidase activity"/>
    <property type="evidence" value="ECO:0007669"/>
    <property type="project" value="UniProtKB-UniRule"/>
</dbReference>
<dbReference type="GO" id="GO:0006281">
    <property type="term" value="P:DNA repair"/>
    <property type="evidence" value="ECO:0007669"/>
    <property type="project" value="UniProtKB-UniRule"/>
</dbReference>
<dbReference type="GO" id="GO:0006260">
    <property type="term" value="P:DNA replication"/>
    <property type="evidence" value="ECO:0007669"/>
    <property type="project" value="UniProtKB-UniRule"/>
</dbReference>
<dbReference type="GO" id="GO:0045892">
    <property type="term" value="P:negative regulation of DNA-templated transcription"/>
    <property type="evidence" value="ECO:0007669"/>
    <property type="project" value="UniProtKB-UniRule"/>
</dbReference>
<dbReference type="GO" id="GO:0006508">
    <property type="term" value="P:proteolysis"/>
    <property type="evidence" value="ECO:0007669"/>
    <property type="project" value="InterPro"/>
</dbReference>
<dbReference type="GO" id="GO:0009432">
    <property type="term" value="P:SOS response"/>
    <property type="evidence" value="ECO:0007669"/>
    <property type="project" value="UniProtKB-UniRule"/>
</dbReference>
<dbReference type="CDD" id="cd06529">
    <property type="entry name" value="S24_LexA-like"/>
    <property type="match status" value="1"/>
</dbReference>
<dbReference type="FunFam" id="1.10.10.10:FF:000009">
    <property type="entry name" value="LexA repressor"/>
    <property type="match status" value="1"/>
</dbReference>
<dbReference type="FunFam" id="2.10.109.10:FF:000001">
    <property type="entry name" value="LexA repressor"/>
    <property type="match status" value="1"/>
</dbReference>
<dbReference type="Gene3D" id="2.10.109.10">
    <property type="entry name" value="Umud Fragment, subunit A"/>
    <property type="match status" value="1"/>
</dbReference>
<dbReference type="Gene3D" id="1.10.10.10">
    <property type="entry name" value="Winged helix-like DNA-binding domain superfamily/Winged helix DNA-binding domain"/>
    <property type="match status" value="1"/>
</dbReference>
<dbReference type="HAMAP" id="MF_00015">
    <property type="entry name" value="LexA"/>
    <property type="match status" value="1"/>
</dbReference>
<dbReference type="InterPro" id="IPR006200">
    <property type="entry name" value="LexA"/>
</dbReference>
<dbReference type="InterPro" id="IPR039418">
    <property type="entry name" value="LexA-like"/>
</dbReference>
<dbReference type="InterPro" id="IPR036286">
    <property type="entry name" value="LexA/Signal_pep-like_sf"/>
</dbReference>
<dbReference type="InterPro" id="IPR006199">
    <property type="entry name" value="LexA_DNA-bd_dom"/>
</dbReference>
<dbReference type="InterPro" id="IPR050077">
    <property type="entry name" value="LexA_repressor"/>
</dbReference>
<dbReference type="InterPro" id="IPR006197">
    <property type="entry name" value="Peptidase_S24_LexA"/>
</dbReference>
<dbReference type="InterPro" id="IPR015927">
    <property type="entry name" value="Peptidase_S24_S26A/B/C"/>
</dbReference>
<dbReference type="InterPro" id="IPR036388">
    <property type="entry name" value="WH-like_DNA-bd_sf"/>
</dbReference>
<dbReference type="InterPro" id="IPR036390">
    <property type="entry name" value="WH_DNA-bd_sf"/>
</dbReference>
<dbReference type="NCBIfam" id="TIGR00498">
    <property type="entry name" value="lexA"/>
    <property type="match status" value="1"/>
</dbReference>
<dbReference type="PANTHER" id="PTHR33516">
    <property type="entry name" value="LEXA REPRESSOR"/>
    <property type="match status" value="1"/>
</dbReference>
<dbReference type="PANTHER" id="PTHR33516:SF2">
    <property type="entry name" value="LEXA REPRESSOR-RELATED"/>
    <property type="match status" value="1"/>
</dbReference>
<dbReference type="Pfam" id="PF01726">
    <property type="entry name" value="LexA_DNA_bind"/>
    <property type="match status" value="1"/>
</dbReference>
<dbReference type="Pfam" id="PF00717">
    <property type="entry name" value="Peptidase_S24"/>
    <property type="match status" value="1"/>
</dbReference>
<dbReference type="PRINTS" id="PR00726">
    <property type="entry name" value="LEXASERPTASE"/>
</dbReference>
<dbReference type="SUPFAM" id="SSF51306">
    <property type="entry name" value="LexA/Signal peptidase"/>
    <property type="match status" value="1"/>
</dbReference>
<dbReference type="SUPFAM" id="SSF46785">
    <property type="entry name" value="Winged helix' DNA-binding domain"/>
    <property type="match status" value="1"/>
</dbReference>
<evidence type="ECO:0000255" key="1">
    <source>
        <dbReference type="HAMAP-Rule" id="MF_00015"/>
    </source>
</evidence>
<name>LEXA_CUPMC</name>
<feature type="chain" id="PRO_1000001323" description="LexA repressor">
    <location>
        <begin position="1"/>
        <end position="218"/>
    </location>
</feature>
<feature type="DNA-binding region" description="H-T-H motif" evidence="1">
    <location>
        <begin position="28"/>
        <end position="48"/>
    </location>
</feature>
<feature type="active site" description="For autocatalytic cleavage activity" evidence="1">
    <location>
        <position position="136"/>
    </location>
</feature>
<feature type="active site" description="For autocatalytic cleavage activity" evidence="1">
    <location>
        <position position="173"/>
    </location>
</feature>
<feature type="site" description="Cleavage; by autolysis" evidence="1">
    <location>
        <begin position="101"/>
        <end position="102"/>
    </location>
</feature>
<keyword id="KW-0068">Autocatalytic cleavage</keyword>
<keyword id="KW-0227">DNA damage</keyword>
<keyword id="KW-0234">DNA repair</keyword>
<keyword id="KW-0235">DNA replication</keyword>
<keyword id="KW-0238">DNA-binding</keyword>
<keyword id="KW-0378">Hydrolase</keyword>
<keyword id="KW-1185">Reference proteome</keyword>
<keyword id="KW-0678">Repressor</keyword>
<keyword id="KW-0742">SOS response</keyword>
<keyword id="KW-0804">Transcription</keyword>
<keyword id="KW-0805">Transcription regulation</keyword>